<evidence type="ECO:0000255" key="1">
    <source>
        <dbReference type="HAMAP-Rule" id="MF_00469"/>
    </source>
</evidence>
<keyword id="KW-0560">Oxidoreductase</keyword>
<keyword id="KW-0819">tRNA processing</keyword>
<comment type="function">
    <text evidence="1">Catalyzes oxygen-dependent 5-hydroxyuridine (ho5U) modification at position 34 in tRNAs.</text>
</comment>
<comment type="catalytic activity">
    <reaction evidence="1">
        <text>uridine(34) in tRNA + AH2 + O2 = 5-hydroxyuridine(34) in tRNA + A + H2O</text>
        <dbReference type="Rhea" id="RHEA:64224"/>
        <dbReference type="Rhea" id="RHEA-COMP:11727"/>
        <dbReference type="Rhea" id="RHEA-COMP:13381"/>
        <dbReference type="ChEBI" id="CHEBI:13193"/>
        <dbReference type="ChEBI" id="CHEBI:15377"/>
        <dbReference type="ChEBI" id="CHEBI:15379"/>
        <dbReference type="ChEBI" id="CHEBI:17499"/>
        <dbReference type="ChEBI" id="CHEBI:65315"/>
        <dbReference type="ChEBI" id="CHEBI:136877"/>
    </reaction>
</comment>
<comment type="similarity">
    <text evidence="1">Belongs to the TrhO family.</text>
</comment>
<dbReference type="EC" id="1.14.-.-" evidence="1"/>
<dbReference type="EMBL" id="CP000848">
    <property type="protein sequence ID" value="ABV75774.1"/>
    <property type="molecule type" value="Genomic_DNA"/>
</dbReference>
<dbReference type="RefSeq" id="WP_012150384.1">
    <property type="nucleotide sequence ID" value="NZ_CP121767.1"/>
</dbReference>
<dbReference type="SMR" id="A8GQU9"/>
<dbReference type="GeneID" id="79936959"/>
<dbReference type="KEGG" id="rri:A1G_00960"/>
<dbReference type="HOGENOM" id="CLU_038878_0_1_5"/>
<dbReference type="Proteomes" id="UP000006832">
    <property type="component" value="Chromosome"/>
</dbReference>
<dbReference type="GO" id="GO:0016705">
    <property type="term" value="F:oxidoreductase activity, acting on paired donors, with incorporation or reduction of molecular oxygen"/>
    <property type="evidence" value="ECO:0007669"/>
    <property type="project" value="UniProtKB-UniRule"/>
</dbReference>
<dbReference type="GO" id="GO:0006400">
    <property type="term" value="P:tRNA modification"/>
    <property type="evidence" value="ECO:0007669"/>
    <property type="project" value="UniProtKB-UniRule"/>
</dbReference>
<dbReference type="CDD" id="cd01518">
    <property type="entry name" value="RHOD_YceA"/>
    <property type="match status" value="1"/>
</dbReference>
<dbReference type="Gene3D" id="3.30.70.100">
    <property type="match status" value="1"/>
</dbReference>
<dbReference type="Gene3D" id="3.40.250.10">
    <property type="entry name" value="Rhodanese-like domain"/>
    <property type="match status" value="1"/>
</dbReference>
<dbReference type="HAMAP" id="MF_00469">
    <property type="entry name" value="TrhO"/>
    <property type="match status" value="1"/>
</dbReference>
<dbReference type="InterPro" id="IPR001763">
    <property type="entry name" value="Rhodanese-like_dom"/>
</dbReference>
<dbReference type="InterPro" id="IPR036873">
    <property type="entry name" value="Rhodanese-like_dom_sf"/>
</dbReference>
<dbReference type="InterPro" id="IPR020936">
    <property type="entry name" value="TrhO"/>
</dbReference>
<dbReference type="InterPro" id="IPR040503">
    <property type="entry name" value="TRHO_N"/>
</dbReference>
<dbReference type="NCBIfam" id="NF002397">
    <property type="entry name" value="PRK01415.1"/>
    <property type="match status" value="1"/>
</dbReference>
<dbReference type="PANTHER" id="PTHR43268:SF3">
    <property type="entry name" value="RHODANESE-LIKE DOMAIN-CONTAINING PROTEIN 7-RELATED"/>
    <property type="match status" value="1"/>
</dbReference>
<dbReference type="PANTHER" id="PTHR43268">
    <property type="entry name" value="THIOSULFATE SULFURTRANSFERASE/RHODANESE-LIKE DOMAIN-CONTAINING PROTEIN 2"/>
    <property type="match status" value="1"/>
</dbReference>
<dbReference type="Pfam" id="PF00581">
    <property type="entry name" value="Rhodanese"/>
    <property type="match status" value="1"/>
</dbReference>
<dbReference type="Pfam" id="PF17773">
    <property type="entry name" value="UPF0176_N"/>
    <property type="match status" value="1"/>
</dbReference>
<dbReference type="SMART" id="SM00450">
    <property type="entry name" value="RHOD"/>
    <property type="match status" value="1"/>
</dbReference>
<dbReference type="SUPFAM" id="SSF52821">
    <property type="entry name" value="Rhodanese/Cell cycle control phosphatase"/>
    <property type="match status" value="1"/>
</dbReference>
<dbReference type="PROSITE" id="PS50206">
    <property type="entry name" value="RHODANESE_3"/>
    <property type="match status" value="1"/>
</dbReference>
<feature type="chain" id="PRO_1000013767" description="tRNA uridine(34) hydroxylase">
    <location>
        <begin position="1"/>
        <end position="247"/>
    </location>
</feature>
<feature type="domain" description="Rhodanese" evidence="1">
    <location>
        <begin position="124"/>
        <end position="218"/>
    </location>
</feature>
<feature type="active site" description="Cysteine persulfide intermediate" evidence="1">
    <location>
        <position position="178"/>
    </location>
</feature>
<accession>A8GQU9</accession>
<organism>
    <name type="scientific">Rickettsia rickettsii (strain Sheila Smith)</name>
    <dbReference type="NCBI Taxonomy" id="392021"/>
    <lineage>
        <taxon>Bacteria</taxon>
        <taxon>Pseudomonadati</taxon>
        <taxon>Pseudomonadota</taxon>
        <taxon>Alphaproteobacteria</taxon>
        <taxon>Rickettsiales</taxon>
        <taxon>Rickettsiaceae</taxon>
        <taxon>Rickettsieae</taxon>
        <taxon>Rickettsia</taxon>
        <taxon>spotted fever group</taxon>
    </lineage>
</organism>
<reference key="1">
    <citation type="submission" date="2007-09" db="EMBL/GenBank/DDBJ databases">
        <title>Complete genome sequence of Rickettsia rickettsii.</title>
        <authorList>
            <person name="Madan A."/>
            <person name="Fahey J."/>
            <person name="Helton E."/>
            <person name="Ketteman M."/>
            <person name="Madan A."/>
            <person name="Rodrigues S."/>
            <person name="Sanchez A."/>
            <person name="Dasch G."/>
            <person name="Eremeeva M."/>
        </authorList>
    </citation>
    <scope>NUCLEOTIDE SEQUENCE [LARGE SCALE GENOMIC DNA]</scope>
    <source>
        <strain>Sheila Smith</strain>
    </source>
</reference>
<sequence length="247" mass="28394">MNEKIAILSAYSFVNIEEPANLIPKLLLLGKRKYIRGTILLANEGFNGSFSGSYENVNLVLEELIKLTGPKDVNVKINYSDVHPFQKLKVRLKKEIIAMNVDDLNVDLFKGEYIEPKDWDEFITKQDVIVIDTRNDYEVEVGTFKSAINPNTKTFKQFPAWVQQNQELLKGKKIAMVCTGGIRCEKSTSLLKSIGYNEVYHLKGGILQYLEDTQNKNNLWQGECFVFDDRRAVTDDLSPVERHWLQR</sequence>
<name>TRHO_RICRS</name>
<gene>
    <name evidence="1" type="primary">trhO</name>
    <name type="ordered locus">A1G_00960</name>
</gene>
<proteinExistence type="inferred from homology"/>
<protein>
    <recommendedName>
        <fullName evidence="1">tRNA uridine(34) hydroxylase</fullName>
        <ecNumber evidence="1">1.14.-.-</ecNumber>
    </recommendedName>
    <alternativeName>
        <fullName evidence="1">tRNA hydroxylation protein O</fullName>
    </alternativeName>
</protein>